<evidence type="ECO:0000255" key="1">
    <source>
        <dbReference type="HAMAP-Rule" id="MF_00385"/>
    </source>
</evidence>
<evidence type="ECO:0000305" key="2"/>
<comment type="similarity">
    <text evidence="1">Belongs to the bacterial ribosomal protein bS16 family.</text>
</comment>
<reference key="1">
    <citation type="journal article" date="2003" name="J. Bacteriol.">
        <title>Comparative analyses of the complete genome sequences of Pierce's disease and citrus variegated chlorosis strains of Xylella fastidiosa.</title>
        <authorList>
            <person name="Van Sluys M.A."/>
            <person name="de Oliveira M.C."/>
            <person name="Monteiro-Vitorello C.B."/>
            <person name="Miyaki C.Y."/>
            <person name="Furlan L.R."/>
            <person name="Camargo L.E.A."/>
            <person name="da Silva A.C.R."/>
            <person name="Moon D.H."/>
            <person name="Takita M.A."/>
            <person name="Lemos E.G.M."/>
            <person name="Machado M.A."/>
            <person name="Ferro M.I.T."/>
            <person name="da Silva F.R."/>
            <person name="Goldman M.H.S."/>
            <person name="Goldman G.H."/>
            <person name="Lemos M.V.F."/>
            <person name="El-Dorry H."/>
            <person name="Tsai S.M."/>
            <person name="Carrer H."/>
            <person name="Carraro D.M."/>
            <person name="de Oliveira R.C."/>
            <person name="Nunes L.R."/>
            <person name="Siqueira W.J."/>
            <person name="Coutinho L.L."/>
            <person name="Kimura E.T."/>
            <person name="Ferro E.S."/>
            <person name="Harakava R."/>
            <person name="Kuramae E.E."/>
            <person name="Marino C.L."/>
            <person name="Giglioti E."/>
            <person name="Abreu I.L."/>
            <person name="Alves L.M.C."/>
            <person name="do Amaral A.M."/>
            <person name="Baia G.S."/>
            <person name="Blanco S.R."/>
            <person name="Brito M.S."/>
            <person name="Cannavan F.S."/>
            <person name="Celestino A.V."/>
            <person name="da Cunha A.F."/>
            <person name="Fenille R.C."/>
            <person name="Ferro J.A."/>
            <person name="Formighieri E.F."/>
            <person name="Kishi L.T."/>
            <person name="Leoni S.G."/>
            <person name="Oliveira A.R."/>
            <person name="Rosa V.E. Jr."/>
            <person name="Sassaki F.T."/>
            <person name="Sena J.A.D."/>
            <person name="de Souza A.A."/>
            <person name="Truffi D."/>
            <person name="Tsukumo F."/>
            <person name="Yanai G.M."/>
            <person name="Zaros L.G."/>
            <person name="Civerolo E.L."/>
            <person name="Simpson A.J.G."/>
            <person name="Almeida N.F. Jr."/>
            <person name="Setubal J.C."/>
            <person name="Kitajima J.P."/>
        </authorList>
    </citation>
    <scope>NUCLEOTIDE SEQUENCE [LARGE SCALE GENOMIC DNA]</scope>
    <source>
        <strain>Temecula1 / ATCC 700964</strain>
    </source>
</reference>
<proteinExistence type="inferred from homology"/>
<organism>
    <name type="scientific">Xylella fastidiosa (strain Temecula1 / ATCC 700964)</name>
    <dbReference type="NCBI Taxonomy" id="183190"/>
    <lineage>
        <taxon>Bacteria</taxon>
        <taxon>Pseudomonadati</taxon>
        <taxon>Pseudomonadota</taxon>
        <taxon>Gammaproteobacteria</taxon>
        <taxon>Lysobacterales</taxon>
        <taxon>Lysobacteraceae</taxon>
        <taxon>Xylella</taxon>
    </lineage>
</organism>
<accession>Q87F56</accession>
<protein>
    <recommendedName>
        <fullName evidence="1">Small ribosomal subunit protein bS16</fullName>
    </recommendedName>
    <alternativeName>
        <fullName evidence="2">30S ribosomal protein S16</fullName>
    </alternativeName>
</protein>
<dbReference type="EMBL" id="AE009442">
    <property type="protein sequence ID" value="AAO27981.1"/>
    <property type="molecule type" value="Genomic_DNA"/>
</dbReference>
<dbReference type="RefSeq" id="WP_004087643.1">
    <property type="nucleotide sequence ID" value="NC_004556.1"/>
</dbReference>
<dbReference type="SMR" id="Q87F56"/>
<dbReference type="GeneID" id="93903772"/>
<dbReference type="KEGG" id="xft:PD_0081"/>
<dbReference type="HOGENOM" id="CLU_100590_5_1_6"/>
<dbReference type="Proteomes" id="UP000002516">
    <property type="component" value="Chromosome"/>
</dbReference>
<dbReference type="GO" id="GO:0005737">
    <property type="term" value="C:cytoplasm"/>
    <property type="evidence" value="ECO:0007669"/>
    <property type="project" value="UniProtKB-ARBA"/>
</dbReference>
<dbReference type="GO" id="GO:0015935">
    <property type="term" value="C:small ribosomal subunit"/>
    <property type="evidence" value="ECO:0007669"/>
    <property type="project" value="TreeGrafter"/>
</dbReference>
<dbReference type="GO" id="GO:0003735">
    <property type="term" value="F:structural constituent of ribosome"/>
    <property type="evidence" value="ECO:0007669"/>
    <property type="project" value="InterPro"/>
</dbReference>
<dbReference type="GO" id="GO:0006412">
    <property type="term" value="P:translation"/>
    <property type="evidence" value="ECO:0007669"/>
    <property type="project" value="UniProtKB-UniRule"/>
</dbReference>
<dbReference type="FunFam" id="3.30.1320.10:FF:000008">
    <property type="entry name" value="30S ribosomal protein S16"/>
    <property type="match status" value="1"/>
</dbReference>
<dbReference type="Gene3D" id="3.30.1320.10">
    <property type="match status" value="1"/>
</dbReference>
<dbReference type="HAMAP" id="MF_00385">
    <property type="entry name" value="Ribosomal_bS16"/>
    <property type="match status" value="1"/>
</dbReference>
<dbReference type="InterPro" id="IPR000307">
    <property type="entry name" value="Ribosomal_bS16"/>
</dbReference>
<dbReference type="InterPro" id="IPR020592">
    <property type="entry name" value="Ribosomal_bS16_CS"/>
</dbReference>
<dbReference type="InterPro" id="IPR023803">
    <property type="entry name" value="Ribosomal_bS16_dom_sf"/>
</dbReference>
<dbReference type="NCBIfam" id="TIGR00002">
    <property type="entry name" value="S16"/>
    <property type="match status" value="1"/>
</dbReference>
<dbReference type="PANTHER" id="PTHR12919">
    <property type="entry name" value="30S RIBOSOMAL PROTEIN S16"/>
    <property type="match status" value="1"/>
</dbReference>
<dbReference type="PANTHER" id="PTHR12919:SF20">
    <property type="entry name" value="SMALL RIBOSOMAL SUBUNIT PROTEIN BS16M"/>
    <property type="match status" value="1"/>
</dbReference>
<dbReference type="Pfam" id="PF00886">
    <property type="entry name" value="Ribosomal_S16"/>
    <property type="match status" value="1"/>
</dbReference>
<dbReference type="SUPFAM" id="SSF54565">
    <property type="entry name" value="Ribosomal protein S16"/>
    <property type="match status" value="1"/>
</dbReference>
<dbReference type="PROSITE" id="PS00732">
    <property type="entry name" value="RIBOSOMAL_S16"/>
    <property type="match status" value="1"/>
</dbReference>
<keyword id="KW-1185">Reference proteome</keyword>
<keyword id="KW-0687">Ribonucleoprotein</keyword>
<keyword id="KW-0689">Ribosomal protein</keyword>
<sequence length="86" mass="9743">MVKIRLTRGGAKKRPFYQIIVTDSRNKRDGRNIERVGHYNPVAQGAESRVVLNMARVEHWVRNGAQLTDKVRSLLKEVSKTQATAA</sequence>
<gene>
    <name evidence="1" type="primary">rpsP</name>
    <name type="ordered locus">PD_0081</name>
</gene>
<name>RS16_XYLFT</name>
<feature type="chain" id="PRO_0000167288" description="Small ribosomal subunit protein bS16">
    <location>
        <begin position="1"/>
        <end position="86"/>
    </location>
</feature>